<protein>
    <recommendedName>
        <fullName evidence="1">Elongation factor 4</fullName>
        <shortName evidence="1">EF-4</shortName>
        <ecNumber evidence="1">3.6.5.n1</ecNumber>
    </recommendedName>
    <alternativeName>
        <fullName evidence="1">Ribosomal back-translocase LepA</fullName>
    </alternativeName>
</protein>
<comment type="function">
    <text evidence="1">Required for accurate and efficient protein synthesis under certain stress conditions. May act as a fidelity factor of the translation reaction, by catalyzing a one-codon backward translocation of tRNAs on improperly translocated ribosomes. Back-translocation proceeds from a post-translocation (POST) complex to a pre-translocation (PRE) complex, thus giving elongation factor G a second chance to translocate the tRNAs correctly. Binds to ribosomes in a GTP-dependent manner.</text>
</comment>
<comment type="catalytic activity">
    <reaction evidence="1">
        <text>GTP + H2O = GDP + phosphate + H(+)</text>
        <dbReference type="Rhea" id="RHEA:19669"/>
        <dbReference type="ChEBI" id="CHEBI:15377"/>
        <dbReference type="ChEBI" id="CHEBI:15378"/>
        <dbReference type="ChEBI" id="CHEBI:37565"/>
        <dbReference type="ChEBI" id="CHEBI:43474"/>
        <dbReference type="ChEBI" id="CHEBI:58189"/>
        <dbReference type="EC" id="3.6.5.n1"/>
    </reaction>
</comment>
<comment type="subcellular location">
    <subcellularLocation>
        <location evidence="1">Cell inner membrane</location>
        <topology evidence="1">Peripheral membrane protein</topology>
        <orientation evidence="1">Cytoplasmic side</orientation>
    </subcellularLocation>
</comment>
<comment type="similarity">
    <text evidence="1">Belongs to the TRAFAC class translation factor GTPase superfamily. Classic translation factor GTPase family. LepA subfamily.</text>
</comment>
<gene>
    <name evidence="1" type="primary">lepA</name>
    <name type="ordered locus">lpp1837</name>
</gene>
<evidence type="ECO:0000255" key="1">
    <source>
        <dbReference type="HAMAP-Rule" id="MF_00071"/>
    </source>
</evidence>
<sequence length="610" mass="67755">MLFARRLEQLKDLNRIRNFSIIAHIDHGKSTLADRFIQICGGLTEREMSSQVLDSMDIERERGITIKAQCVSLNYTAKDGKTYLLNFIDTPGHVDFSYEVSRSLAACEGAILVVDAAQGVEAQTLAVCYTAIDQSLTVLPVLNKIDLPQAEPERVISEIEDIIGLDAQDAIRVSAKSGLGVNDVLEALVANIPPPKGDVHAPLQALIIDSWFDSYLGVVSLVRIVNGAIRKGDKMRVMSTGRAYEVDQVGIFTPKRTKLDALYAGEVGYVVAGIKEIQGAPVGDTLTLDRNPADKVLPGFQRVKPQVYAGLFPVSSDDFEAFREALAKLSLNDASLFYEPESSEALGFGFRCGFLGMLHMEIIQERLEREYNLDLISTAPTVVYQIVTQKGETLLIDNPSHLPPTPQIKEMYEPIVRANILVPQDYLGPIITLCVERRGVQVSMTYSGRHVSVVYDIPMSEVVSDFFDRLKSVSRGYASLDYNFQRFQIADLVKMDILINSERVDALAVIVHRDSAHSRGKLIAEKMQQLIPRQMFDVAIQAAIGSHIIARQTVKALRKNVTAKCYGGDVTRKRKLLEKQKAGKKRMKQVGHVEIPQEAFMAVFQTDKKK</sequence>
<name>LEPA_LEGPA</name>
<reference key="1">
    <citation type="journal article" date="2004" name="Nat. Genet.">
        <title>Evidence in the Legionella pneumophila genome for exploitation of host cell functions and high genome plasticity.</title>
        <authorList>
            <person name="Cazalet C."/>
            <person name="Rusniok C."/>
            <person name="Brueggemann H."/>
            <person name="Zidane N."/>
            <person name="Magnier A."/>
            <person name="Ma L."/>
            <person name="Tichit M."/>
            <person name="Jarraud S."/>
            <person name="Bouchier C."/>
            <person name="Vandenesch F."/>
            <person name="Kunst F."/>
            <person name="Etienne J."/>
            <person name="Glaser P."/>
            <person name="Buchrieser C."/>
        </authorList>
    </citation>
    <scope>NUCLEOTIDE SEQUENCE [LARGE SCALE GENOMIC DNA]</scope>
    <source>
        <strain>Paris</strain>
    </source>
</reference>
<organism>
    <name type="scientific">Legionella pneumophila (strain Paris)</name>
    <dbReference type="NCBI Taxonomy" id="297246"/>
    <lineage>
        <taxon>Bacteria</taxon>
        <taxon>Pseudomonadati</taxon>
        <taxon>Pseudomonadota</taxon>
        <taxon>Gammaproteobacteria</taxon>
        <taxon>Legionellales</taxon>
        <taxon>Legionellaceae</taxon>
        <taxon>Legionella</taxon>
    </lineage>
</organism>
<dbReference type="EC" id="3.6.5.n1" evidence="1"/>
<dbReference type="EMBL" id="CR628336">
    <property type="protein sequence ID" value="CAH12989.1"/>
    <property type="molecule type" value="Genomic_DNA"/>
</dbReference>
<dbReference type="RefSeq" id="WP_010947592.1">
    <property type="nucleotide sequence ID" value="NC_006368.1"/>
</dbReference>
<dbReference type="SMR" id="Q5X443"/>
<dbReference type="GeneID" id="57035864"/>
<dbReference type="KEGG" id="lpp:lpp1837"/>
<dbReference type="LegioList" id="lpp1837"/>
<dbReference type="HOGENOM" id="CLU_009995_3_3_6"/>
<dbReference type="GO" id="GO:0005886">
    <property type="term" value="C:plasma membrane"/>
    <property type="evidence" value="ECO:0007669"/>
    <property type="project" value="UniProtKB-SubCell"/>
</dbReference>
<dbReference type="GO" id="GO:0005525">
    <property type="term" value="F:GTP binding"/>
    <property type="evidence" value="ECO:0007669"/>
    <property type="project" value="UniProtKB-UniRule"/>
</dbReference>
<dbReference type="GO" id="GO:0003924">
    <property type="term" value="F:GTPase activity"/>
    <property type="evidence" value="ECO:0007669"/>
    <property type="project" value="UniProtKB-UniRule"/>
</dbReference>
<dbReference type="GO" id="GO:0097216">
    <property type="term" value="F:guanosine tetraphosphate binding"/>
    <property type="evidence" value="ECO:0007669"/>
    <property type="project" value="UniProtKB-ARBA"/>
</dbReference>
<dbReference type="GO" id="GO:0043022">
    <property type="term" value="F:ribosome binding"/>
    <property type="evidence" value="ECO:0007669"/>
    <property type="project" value="UniProtKB-UniRule"/>
</dbReference>
<dbReference type="GO" id="GO:0003746">
    <property type="term" value="F:translation elongation factor activity"/>
    <property type="evidence" value="ECO:0007669"/>
    <property type="project" value="UniProtKB-UniRule"/>
</dbReference>
<dbReference type="GO" id="GO:0045727">
    <property type="term" value="P:positive regulation of translation"/>
    <property type="evidence" value="ECO:0007669"/>
    <property type="project" value="UniProtKB-UniRule"/>
</dbReference>
<dbReference type="CDD" id="cd03699">
    <property type="entry name" value="EF4_II"/>
    <property type="match status" value="1"/>
</dbReference>
<dbReference type="CDD" id="cd16260">
    <property type="entry name" value="EF4_III"/>
    <property type="match status" value="1"/>
</dbReference>
<dbReference type="CDD" id="cd01890">
    <property type="entry name" value="LepA"/>
    <property type="match status" value="1"/>
</dbReference>
<dbReference type="CDD" id="cd03709">
    <property type="entry name" value="lepA_C"/>
    <property type="match status" value="1"/>
</dbReference>
<dbReference type="FunFam" id="3.40.50.300:FF:000078">
    <property type="entry name" value="Elongation factor 4"/>
    <property type="match status" value="1"/>
</dbReference>
<dbReference type="FunFam" id="2.40.30.10:FF:000015">
    <property type="entry name" value="Translation factor GUF1, mitochondrial"/>
    <property type="match status" value="1"/>
</dbReference>
<dbReference type="FunFam" id="3.30.70.240:FF:000007">
    <property type="entry name" value="Translation factor GUF1, mitochondrial"/>
    <property type="match status" value="1"/>
</dbReference>
<dbReference type="FunFam" id="3.30.70.2570:FF:000001">
    <property type="entry name" value="Translation factor GUF1, mitochondrial"/>
    <property type="match status" value="1"/>
</dbReference>
<dbReference type="FunFam" id="3.30.70.870:FF:000004">
    <property type="entry name" value="Translation factor GUF1, mitochondrial"/>
    <property type="match status" value="1"/>
</dbReference>
<dbReference type="Gene3D" id="3.30.70.240">
    <property type="match status" value="1"/>
</dbReference>
<dbReference type="Gene3D" id="3.30.70.2570">
    <property type="entry name" value="Elongation factor 4, C-terminal domain"/>
    <property type="match status" value="1"/>
</dbReference>
<dbReference type="Gene3D" id="3.30.70.870">
    <property type="entry name" value="Elongation Factor G (Translational Gtpase), domain 3"/>
    <property type="match status" value="1"/>
</dbReference>
<dbReference type="Gene3D" id="3.40.50.300">
    <property type="entry name" value="P-loop containing nucleotide triphosphate hydrolases"/>
    <property type="match status" value="1"/>
</dbReference>
<dbReference type="Gene3D" id="2.40.30.10">
    <property type="entry name" value="Translation factors"/>
    <property type="match status" value="1"/>
</dbReference>
<dbReference type="HAMAP" id="MF_00071">
    <property type="entry name" value="LepA"/>
    <property type="match status" value="1"/>
</dbReference>
<dbReference type="InterPro" id="IPR006297">
    <property type="entry name" value="EF-4"/>
</dbReference>
<dbReference type="InterPro" id="IPR035647">
    <property type="entry name" value="EFG_III/V"/>
</dbReference>
<dbReference type="InterPro" id="IPR000640">
    <property type="entry name" value="EFG_V-like"/>
</dbReference>
<dbReference type="InterPro" id="IPR004161">
    <property type="entry name" value="EFTu-like_2"/>
</dbReference>
<dbReference type="InterPro" id="IPR031157">
    <property type="entry name" value="G_TR_CS"/>
</dbReference>
<dbReference type="InterPro" id="IPR038363">
    <property type="entry name" value="LepA_C_sf"/>
</dbReference>
<dbReference type="InterPro" id="IPR013842">
    <property type="entry name" value="LepA_CTD"/>
</dbReference>
<dbReference type="InterPro" id="IPR035654">
    <property type="entry name" value="LepA_IV"/>
</dbReference>
<dbReference type="InterPro" id="IPR027417">
    <property type="entry name" value="P-loop_NTPase"/>
</dbReference>
<dbReference type="InterPro" id="IPR005225">
    <property type="entry name" value="Small_GTP-bd"/>
</dbReference>
<dbReference type="InterPro" id="IPR000795">
    <property type="entry name" value="T_Tr_GTP-bd_dom"/>
</dbReference>
<dbReference type="NCBIfam" id="TIGR01393">
    <property type="entry name" value="lepA"/>
    <property type="match status" value="1"/>
</dbReference>
<dbReference type="NCBIfam" id="TIGR00231">
    <property type="entry name" value="small_GTP"/>
    <property type="match status" value="1"/>
</dbReference>
<dbReference type="PANTHER" id="PTHR43512:SF4">
    <property type="entry name" value="TRANSLATION FACTOR GUF1 HOMOLOG, CHLOROPLASTIC"/>
    <property type="match status" value="1"/>
</dbReference>
<dbReference type="PANTHER" id="PTHR43512">
    <property type="entry name" value="TRANSLATION FACTOR GUF1-RELATED"/>
    <property type="match status" value="1"/>
</dbReference>
<dbReference type="Pfam" id="PF00679">
    <property type="entry name" value="EFG_C"/>
    <property type="match status" value="1"/>
</dbReference>
<dbReference type="Pfam" id="PF00009">
    <property type="entry name" value="GTP_EFTU"/>
    <property type="match status" value="1"/>
</dbReference>
<dbReference type="Pfam" id="PF03144">
    <property type="entry name" value="GTP_EFTU_D2"/>
    <property type="match status" value="1"/>
</dbReference>
<dbReference type="Pfam" id="PF06421">
    <property type="entry name" value="LepA_C"/>
    <property type="match status" value="1"/>
</dbReference>
<dbReference type="PRINTS" id="PR00315">
    <property type="entry name" value="ELONGATNFCT"/>
</dbReference>
<dbReference type="SMART" id="SM00838">
    <property type="entry name" value="EFG_C"/>
    <property type="match status" value="1"/>
</dbReference>
<dbReference type="SUPFAM" id="SSF54980">
    <property type="entry name" value="EF-G C-terminal domain-like"/>
    <property type="match status" value="2"/>
</dbReference>
<dbReference type="SUPFAM" id="SSF52540">
    <property type="entry name" value="P-loop containing nucleoside triphosphate hydrolases"/>
    <property type="match status" value="1"/>
</dbReference>
<dbReference type="PROSITE" id="PS00301">
    <property type="entry name" value="G_TR_1"/>
    <property type="match status" value="1"/>
</dbReference>
<dbReference type="PROSITE" id="PS51722">
    <property type="entry name" value="G_TR_2"/>
    <property type="match status" value="1"/>
</dbReference>
<keyword id="KW-0997">Cell inner membrane</keyword>
<keyword id="KW-1003">Cell membrane</keyword>
<keyword id="KW-0342">GTP-binding</keyword>
<keyword id="KW-0378">Hydrolase</keyword>
<keyword id="KW-0472">Membrane</keyword>
<keyword id="KW-0547">Nucleotide-binding</keyword>
<keyword id="KW-0648">Protein biosynthesis</keyword>
<feature type="chain" id="PRO_0000224770" description="Elongation factor 4">
    <location>
        <begin position="1"/>
        <end position="610"/>
    </location>
</feature>
<feature type="domain" description="tr-type G">
    <location>
        <begin position="14"/>
        <end position="196"/>
    </location>
</feature>
<feature type="binding site" evidence="1">
    <location>
        <begin position="26"/>
        <end position="31"/>
    </location>
    <ligand>
        <name>GTP</name>
        <dbReference type="ChEBI" id="CHEBI:37565"/>
    </ligand>
</feature>
<feature type="binding site" evidence="1">
    <location>
        <begin position="143"/>
        <end position="146"/>
    </location>
    <ligand>
        <name>GTP</name>
        <dbReference type="ChEBI" id="CHEBI:37565"/>
    </ligand>
</feature>
<proteinExistence type="inferred from homology"/>
<accession>Q5X443</accession>